<comment type="function">
    <text evidence="1">Endonuclease that introduces double-strand break into pseudo palindromic 17 bp DNA sequence yielding 1 bp extensions with 3'-overhangs.</text>
</comment>
<comment type="induction">
    <text evidence="4">Expressed in the early phase of the viral replicative cycle.</text>
</comment>
<name>TFLIV_BPT5</name>
<gene>
    <name evidence="5" type="primary">hegA</name>
    <name evidence="7" type="ORF">ORF070</name>
    <name evidence="5" type="ORF">T5.075</name>
    <name evidence="6" type="ORF">T5p073</name>
</gene>
<organism>
    <name type="scientific">Escherichia phage T5</name>
    <name type="common">Enterobacteria phage T5</name>
    <dbReference type="NCBI Taxonomy" id="2695836"/>
    <lineage>
        <taxon>Viruses</taxon>
        <taxon>Duplodnaviria</taxon>
        <taxon>Heunggongvirae</taxon>
        <taxon>Uroviricota</taxon>
        <taxon>Caudoviricetes</taxon>
        <taxon>Demerecviridae</taxon>
        <taxon>Markadamsvirinae</taxon>
        <taxon>Tequintavirus</taxon>
        <taxon>Tequintavirus T5</taxon>
    </lineage>
</organism>
<feature type="chain" id="PRO_0000435549" description="H-N-H endonuclease F-TflIV">
    <location>
        <begin position="1"/>
        <end position="227"/>
    </location>
</feature>
<feature type="sequence conflict" description="In Ref. 3; AAX12007." evidence="2" ref="3">
    <original>NR</original>
    <variation>T</variation>
    <location>
        <begin position="226"/>
        <end position="227"/>
    </location>
</feature>
<protein>
    <recommendedName>
        <fullName evidence="5">H-N-H endonuclease F-TflIV</fullName>
        <ecNumber evidence="3">3.1.21.-</ecNumber>
    </recommendedName>
    <alternativeName>
        <fullName>HNH endodeoxyribonuclease F-TflIV</fullName>
    </alternativeName>
    <alternativeName>
        <fullName evidence="6">HNH endonuclease F-TflIV</fullName>
    </alternativeName>
</protein>
<keyword id="KW-0238">DNA-binding</keyword>
<keyword id="KW-0244">Early protein</keyword>
<keyword id="KW-0255">Endonuclease</keyword>
<keyword id="KW-0378">Hydrolase</keyword>
<keyword id="KW-0540">Nuclease</keyword>
<keyword id="KW-1185">Reference proteome</keyword>
<organismHost>
    <name type="scientific">Escherichia coli</name>
    <dbReference type="NCBI Taxonomy" id="562"/>
</organismHost>
<sequence length="227" mass="25763">MRTDILDRKEEIAQWIAQGKSKAEIARMLSCSSNTLEAYLGKLGIVVIPTNRQYDNKYKSATEYLYNGSPISSYKLKNKILNEGLKPHKCESCGLESWLDKPIPLELEHKDGNHYNNEWDNLALLCPNCHALTPTHAGKNIGRYTERTVNTCAICHCEISSRATHCKSCTPKGITINPDITVEQIEYWVSKYSWIRASKELGLSDTGLRKRYKSLTGKDPKSIKKNR</sequence>
<dbReference type="EC" id="3.1.21.-" evidence="3"/>
<dbReference type="EMBL" id="AY543070">
    <property type="protein sequence ID" value="AAS77121.1"/>
    <property type="molecule type" value="Genomic_DNA"/>
</dbReference>
<dbReference type="EMBL" id="AY587007">
    <property type="protein sequence ID" value="AAX12007.1"/>
    <property type="molecule type" value="Genomic_DNA"/>
</dbReference>
<dbReference type="EMBL" id="AY734508">
    <property type="protein sequence ID" value="AAU09414.1"/>
    <property type="molecule type" value="Genomic_DNA"/>
</dbReference>
<dbReference type="RefSeq" id="YP_006903.1">
    <property type="nucleotide sequence ID" value="NC_005859.1"/>
</dbReference>
<dbReference type="SMR" id="Q6QGL2"/>
<dbReference type="REBASE" id="10523">
    <property type="entry name" value="F-EcoT5IV"/>
</dbReference>
<dbReference type="GeneID" id="2777587"/>
<dbReference type="KEGG" id="vg:2777587"/>
<dbReference type="Proteomes" id="UP000002107">
    <property type="component" value="Genome"/>
</dbReference>
<dbReference type="Proteomes" id="UP000002141">
    <property type="component" value="Segment"/>
</dbReference>
<dbReference type="GO" id="GO:0003677">
    <property type="term" value="F:DNA binding"/>
    <property type="evidence" value="ECO:0007669"/>
    <property type="project" value="UniProtKB-KW"/>
</dbReference>
<dbReference type="GO" id="GO:0004519">
    <property type="term" value="F:endonuclease activity"/>
    <property type="evidence" value="ECO:0000314"/>
    <property type="project" value="UniProtKB"/>
</dbReference>
<dbReference type="GO" id="GO:0006355">
    <property type="term" value="P:regulation of DNA-templated transcription"/>
    <property type="evidence" value="ECO:0007669"/>
    <property type="project" value="InterPro"/>
</dbReference>
<dbReference type="CDD" id="cd00085">
    <property type="entry name" value="HNHc"/>
    <property type="match status" value="1"/>
</dbReference>
<dbReference type="Gene3D" id="1.10.10.10">
    <property type="entry name" value="Winged helix-like DNA-binding domain superfamily/Winged helix DNA-binding domain"/>
    <property type="match status" value="1"/>
</dbReference>
<dbReference type="InterPro" id="IPR003615">
    <property type="entry name" value="HNH_nuc"/>
</dbReference>
<dbReference type="InterPro" id="IPR016032">
    <property type="entry name" value="Sig_transdc_resp-reg_C-effctor"/>
</dbReference>
<dbReference type="InterPro" id="IPR000792">
    <property type="entry name" value="Tscrpt_reg_LuxR_C"/>
</dbReference>
<dbReference type="InterPro" id="IPR036388">
    <property type="entry name" value="WH-like_DNA-bd_sf"/>
</dbReference>
<dbReference type="Pfam" id="PF00196">
    <property type="entry name" value="GerE"/>
    <property type="match status" value="1"/>
</dbReference>
<dbReference type="SUPFAM" id="SSF46894">
    <property type="entry name" value="C-terminal effector domain of the bipartite response regulators"/>
    <property type="match status" value="1"/>
</dbReference>
<reference key="1">
    <citation type="journal article" date="1994" name="Mol. Biol. (Mosk.)">
        <title>Features of the structure of transfer RNA coded by bacteriophage T5.</title>
        <authorList>
            <person name="Shliapnikov M.G."/>
            <person name="Ksenzenko V.N."/>
        </authorList>
    </citation>
    <scope>NUCLEOTIDE SEQUENCE [GENOMIC DNA]</scope>
</reference>
<reference key="2">
    <citation type="submission" date="2004-01" db="EMBL/GenBank/DDBJ databases">
        <title>Bacteriophage T5 complete genome.</title>
        <authorList>
            <person name="Ksenzenko V.N."/>
            <person name="Kaliman A.V."/>
            <person name="Krutilina A.I."/>
            <person name="Shlyapnikov M.G."/>
        </authorList>
    </citation>
    <scope>NUCLEOTIDE SEQUENCE [LARGE SCALE GENOMIC DNA]</scope>
</reference>
<reference key="3">
    <citation type="journal article" date="2005" name="Virology">
        <title>Complete genome sequence of bacteriophage T5.</title>
        <authorList>
            <person name="Wang J."/>
            <person name="Jiang Y."/>
            <person name="Vincent M."/>
            <person name="Sun Y."/>
            <person name="Yu H."/>
            <person name="Wang J."/>
            <person name="Bao Q."/>
            <person name="Kong H."/>
            <person name="Hu S."/>
        </authorList>
    </citation>
    <scope>NUCLEOTIDE SEQUENCE [LARGE SCALE GENOMIC DNA]</scope>
    <scope>INDUCTION</scope>
    <source>
        <strain evidence="7">ATCC 11303-B5</strain>
    </source>
</reference>
<reference key="4">
    <citation type="journal article" date="2014" name="J. Virol.">
        <title>Insights into bacteriophage T5 structure from analysis of its morphogenesis genes and protein components.</title>
        <authorList>
            <person name="Zivanovic Y."/>
            <person name="Confalonieri F."/>
            <person name="Ponchon L."/>
            <person name="Lurz R."/>
            <person name="Chami M."/>
            <person name="Flayhan A."/>
            <person name="Renouard M."/>
            <person name="Huet A."/>
            <person name="Decottignies P."/>
            <person name="Davidson A.R."/>
            <person name="Breyton C."/>
            <person name="Boulanger P."/>
        </authorList>
    </citation>
    <scope>NUCLEOTIDE SEQUENCE [LARGE SCALE GENOMIC DNA]</scope>
    <source>
        <strain>St0 deletion mutant</strain>
    </source>
</reference>
<reference key="5">
    <citation type="journal article" date="2004" name="Mol. Biol. (Mosk.)">
        <title>Novel site-specific endonucleases F-TflI, F-TflII and F-TflIV encoded by the bacteriophage T5.</title>
        <authorList>
            <person name="Akulenko N.V."/>
            <person name="Ivashina T.V."/>
            <person name="Shaloiko L.A."/>
            <person name="Shliapnikov M.G."/>
            <person name="Ksenzenko V.N."/>
        </authorList>
    </citation>
    <scope>FUNCTION</scope>
</reference>
<proteinExistence type="evidence at transcript level"/>
<accession>Q6QGL2</accession>
<accession>Q5DMM4</accession>
<evidence type="ECO:0000269" key="1">
    <source>
    </source>
</evidence>
<evidence type="ECO:0000305" key="2"/>
<evidence type="ECO:0000305" key="3">
    <source>
    </source>
</evidence>
<evidence type="ECO:0000305" key="4">
    <source>
    </source>
</evidence>
<evidence type="ECO:0000312" key="5">
    <source>
        <dbReference type="EMBL" id="AAS77121.1"/>
    </source>
</evidence>
<evidence type="ECO:0000312" key="6">
    <source>
        <dbReference type="EMBL" id="AAU09414.1"/>
    </source>
</evidence>
<evidence type="ECO:0000312" key="7">
    <source>
        <dbReference type="EMBL" id="AAX12007.1"/>
    </source>
</evidence>